<keyword id="KW-0067">ATP-binding</keyword>
<keyword id="KW-0433">Leucine-rich repeat</keyword>
<keyword id="KW-0547">Nucleotide-binding</keyword>
<keyword id="KW-0611">Plant defense</keyword>
<keyword id="KW-1185">Reference proteome</keyword>
<keyword id="KW-0677">Repeat</keyword>
<proteinExistence type="evidence at transcript level"/>
<dbReference type="EMBL" id="AB008018">
    <property type="protein sequence ID" value="BAA88265.1"/>
    <property type="status" value="ALT_SEQ"/>
    <property type="molecule type" value="mRNA"/>
</dbReference>
<dbReference type="EMBL" id="AB077822">
    <property type="protein sequence ID" value="BAB83871.1"/>
    <property type="molecule type" value="Genomic_DNA"/>
</dbReference>
<dbReference type="EMBL" id="AC082643">
    <property type="protein sequence ID" value="AAG50638.1"/>
    <property type="molecule type" value="Genomic_DNA"/>
</dbReference>
<dbReference type="EMBL" id="CP002684">
    <property type="protein sequence ID" value="AEE33544.1"/>
    <property type="molecule type" value="Genomic_DNA"/>
</dbReference>
<dbReference type="EMBL" id="CP002684">
    <property type="protein sequence ID" value="ANM60615.1"/>
    <property type="molecule type" value="Genomic_DNA"/>
</dbReference>
<dbReference type="EMBL" id="AY062798">
    <property type="protein sequence ID" value="AAL32876.1"/>
    <property type="status" value="ALT_INIT"/>
    <property type="molecule type" value="mRNA"/>
</dbReference>
<dbReference type="PIR" id="F96617">
    <property type="entry name" value="F96617"/>
</dbReference>
<dbReference type="PIR" id="T52465">
    <property type="entry name" value="T52465"/>
</dbReference>
<dbReference type="RefSeq" id="NP_001319265.1">
    <property type="nucleotide sequence ID" value="NM_001333830.1"/>
</dbReference>
<dbReference type="RefSeq" id="NP_176135.1">
    <property type="nucleotide sequence ID" value="NM_104619.3"/>
</dbReference>
<dbReference type="SMR" id="Q8W474"/>
<dbReference type="BioGRID" id="27433">
    <property type="interactions" value="1"/>
</dbReference>
<dbReference type="STRING" id="3702.Q8W474"/>
<dbReference type="iPTMnet" id="Q8W474"/>
<dbReference type="PaxDb" id="3702-AT1G58390.1"/>
<dbReference type="ProteomicsDB" id="224348"/>
<dbReference type="EnsemblPlants" id="AT1G58390.1">
    <property type="protein sequence ID" value="AT1G58390.1"/>
    <property type="gene ID" value="AT1G58390"/>
</dbReference>
<dbReference type="EnsemblPlants" id="AT1G58390.2">
    <property type="protein sequence ID" value="AT1G58390.2"/>
    <property type="gene ID" value="AT1G58390"/>
</dbReference>
<dbReference type="GeneID" id="842208"/>
<dbReference type="Gramene" id="AT1G58390.1">
    <property type="protein sequence ID" value="AT1G58390.1"/>
    <property type="gene ID" value="AT1G58390"/>
</dbReference>
<dbReference type="Gramene" id="AT1G58390.2">
    <property type="protein sequence ID" value="AT1G58390.2"/>
    <property type="gene ID" value="AT1G58390"/>
</dbReference>
<dbReference type="KEGG" id="ath:AT1G58390"/>
<dbReference type="Araport" id="AT1G58390"/>
<dbReference type="TAIR" id="AT1G58390"/>
<dbReference type="eggNOG" id="KOG4658">
    <property type="taxonomic scope" value="Eukaryota"/>
</dbReference>
<dbReference type="HOGENOM" id="CLU_000837_25_4_1"/>
<dbReference type="InParanoid" id="Q8W474"/>
<dbReference type="OMA" id="ICLAPEN"/>
<dbReference type="PRO" id="PR:Q8W474"/>
<dbReference type="Proteomes" id="UP000006548">
    <property type="component" value="Chromosome 1"/>
</dbReference>
<dbReference type="ExpressionAtlas" id="Q8W474">
    <property type="expression patterns" value="baseline and differential"/>
</dbReference>
<dbReference type="GO" id="GO:0043531">
    <property type="term" value="F:ADP binding"/>
    <property type="evidence" value="ECO:0007669"/>
    <property type="project" value="InterPro"/>
</dbReference>
<dbReference type="GO" id="GO:0005524">
    <property type="term" value="F:ATP binding"/>
    <property type="evidence" value="ECO:0007669"/>
    <property type="project" value="UniProtKB-KW"/>
</dbReference>
<dbReference type="GO" id="GO:0006952">
    <property type="term" value="P:defense response"/>
    <property type="evidence" value="ECO:0007669"/>
    <property type="project" value="UniProtKB-KW"/>
</dbReference>
<dbReference type="GO" id="GO:0051707">
    <property type="term" value="P:response to other organism"/>
    <property type="evidence" value="ECO:0007669"/>
    <property type="project" value="UniProtKB-ARBA"/>
</dbReference>
<dbReference type="CDD" id="cd14798">
    <property type="entry name" value="RX-CC_like"/>
    <property type="match status" value="1"/>
</dbReference>
<dbReference type="FunFam" id="3.40.50.300:FF:001091">
    <property type="entry name" value="Probable disease resistance protein At1g61300"/>
    <property type="match status" value="1"/>
</dbReference>
<dbReference type="FunFam" id="1.10.10.10:FF:000322">
    <property type="entry name" value="Probable disease resistance protein At1g63360"/>
    <property type="match status" value="1"/>
</dbReference>
<dbReference type="FunFam" id="1.10.8.430:FF:000003">
    <property type="entry name" value="Probable disease resistance protein At5g66910"/>
    <property type="match status" value="1"/>
</dbReference>
<dbReference type="Gene3D" id="1.20.5.4130">
    <property type="match status" value="1"/>
</dbReference>
<dbReference type="Gene3D" id="1.10.8.430">
    <property type="entry name" value="Helical domain of apoptotic protease-activating factors"/>
    <property type="match status" value="1"/>
</dbReference>
<dbReference type="Gene3D" id="3.40.50.300">
    <property type="entry name" value="P-loop containing nucleotide triphosphate hydrolases"/>
    <property type="match status" value="1"/>
</dbReference>
<dbReference type="Gene3D" id="3.80.10.10">
    <property type="entry name" value="Ribonuclease Inhibitor"/>
    <property type="match status" value="1"/>
</dbReference>
<dbReference type="Gene3D" id="1.10.10.10">
    <property type="entry name" value="Winged helix-like DNA-binding domain superfamily/Winged helix DNA-binding domain"/>
    <property type="match status" value="1"/>
</dbReference>
<dbReference type="InterPro" id="IPR042197">
    <property type="entry name" value="Apaf_helical"/>
</dbReference>
<dbReference type="InterPro" id="IPR044974">
    <property type="entry name" value="Disease_R_plants"/>
</dbReference>
<dbReference type="InterPro" id="IPR032675">
    <property type="entry name" value="LRR_dom_sf"/>
</dbReference>
<dbReference type="InterPro" id="IPR055414">
    <property type="entry name" value="LRR_R13L4/SHOC2-like"/>
</dbReference>
<dbReference type="InterPro" id="IPR002182">
    <property type="entry name" value="NB-ARC"/>
</dbReference>
<dbReference type="InterPro" id="IPR027417">
    <property type="entry name" value="P-loop_NTPase"/>
</dbReference>
<dbReference type="InterPro" id="IPR038005">
    <property type="entry name" value="RX-like_CC"/>
</dbReference>
<dbReference type="InterPro" id="IPR041118">
    <property type="entry name" value="Rx_N"/>
</dbReference>
<dbReference type="InterPro" id="IPR036388">
    <property type="entry name" value="WH-like_DNA-bd_sf"/>
</dbReference>
<dbReference type="PANTHER" id="PTHR23155">
    <property type="entry name" value="DISEASE RESISTANCE PROTEIN RP"/>
    <property type="match status" value="1"/>
</dbReference>
<dbReference type="PANTHER" id="PTHR23155:SF1185">
    <property type="entry name" value="DISEASE RESISTANCE RPP8-LIKE PROTEIN 3-RELATED"/>
    <property type="match status" value="1"/>
</dbReference>
<dbReference type="Pfam" id="PF23598">
    <property type="entry name" value="LRR_14"/>
    <property type="match status" value="1"/>
</dbReference>
<dbReference type="Pfam" id="PF00931">
    <property type="entry name" value="NB-ARC"/>
    <property type="match status" value="1"/>
</dbReference>
<dbReference type="Pfam" id="PF18052">
    <property type="entry name" value="Rx_N"/>
    <property type="match status" value="1"/>
</dbReference>
<dbReference type="Pfam" id="PF23559">
    <property type="entry name" value="WH_DRP"/>
    <property type="match status" value="1"/>
</dbReference>
<dbReference type="PRINTS" id="PR00364">
    <property type="entry name" value="DISEASERSIST"/>
</dbReference>
<dbReference type="SUPFAM" id="SSF52058">
    <property type="entry name" value="L domain-like"/>
    <property type="match status" value="1"/>
</dbReference>
<dbReference type="SUPFAM" id="SSF52540">
    <property type="entry name" value="P-loop containing nucleoside triphosphate hydrolases"/>
    <property type="match status" value="1"/>
</dbReference>
<protein>
    <recommendedName>
        <fullName>Probable disease resistance protein At1g58390</fullName>
    </recommendedName>
</protein>
<feature type="chain" id="PRO_0000212739" description="Probable disease resistance protein At1g58390">
    <location>
        <begin position="1"/>
        <end position="907"/>
    </location>
</feature>
<feature type="domain" description="NB-ARC">
    <location>
        <begin position="144"/>
        <end position="456"/>
    </location>
</feature>
<feature type="repeat" description="LRR 1">
    <location>
        <begin position="608"/>
        <end position="631"/>
    </location>
</feature>
<feature type="repeat" description="LRR 2">
    <location>
        <begin position="843"/>
        <end position="868"/>
    </location>
</feature>
<feature type="binding site" evidence="2">
    <location>
        <begin position="190"/>
        <end position="197"/>
    </location>
    <ligand>
        <name>ATP</name>
        <dbReference type="ChEBI" id="CHEBI:30616"/>
    </ligand>
</feature>
<feature type="sequence conflict" description="In Ref. 1; BAA88265." evidence="3" ref="1">
    <original>R</original>
    <variation>K</variation>
    <location>
        <position position="587"/>
    </location>
</feature>
<sequence length="907" mass="104596">MAGELVSFGIKKLWDLLSQECEQFQGVEDQVTGLKRDLNLLSSFLKDADAKKHTTAVVRNVVEEIKEIVYDAEDIIETYLLKEKLWKTSGIKMRIRRHACIISDRRRNALDVGGIRTRISDVIRDMQSFGVQQAIVDGGYMQPQGDRQREMRQTFSKDYESDFVGLEVNVKKLVGYLVDEENVQVVSITGMGGLGKTTLARQVFNHEDVKHQFDRLAWVCVSQEFTRKNVWQMILQNLTSREKKDEILQMEEAELHDKLFQLLETSKSLIVFDDIWKDEDWDLIKPIFPPNKGWKVLLTSQNESVAVRGDIKYLNFKPECLAIEDSWTLFQRIAFPKKDASESKVDEEMEDMGKQMLKHCGGLPLAIKVLGGLLAAKYTMHDWERLSVNIGSDIVGRTSSNNSSIYHVLSMSFEELPSYLKHCFLYLAHFPEDHKINVEKLSYCWAAEGISTAEDYHNGETIQDVGQSYLEELVRRNMIIWERDATASRFGTCHLHDMMREVCLFKAKEENFLQIAVKSVGVTSSSTGNSQSPCRSRRLVYQCPTTLHVERDINNPKLRSLVVLWHDLWVENWKLLGTSFTRLKLLRVLDLFYVDFEGMKLPFGIGNLIHLRYLSLQDAKVSHLPSSLGNLMLLIYLNLDVDTEFIFVPDVFMRMHELRYLKLPLHMHKKTRLSLRNLVKLETLVYFSTWHSSSKDLCGMTRLMTLAIRLTRVTSTETLSASISGLRNLEYLYIVGTHSKKMREEGIVLDFIHLKHLLLDLYMPRQQHFPSRLTFVKLSECGLEEDPMPILEKLLHLKGVILLKGSYCGRRMVCSGGGFPQLKKLEIVGLNKWEEWLVEEGSMPLLETLSILDCEELKEIPDGLRFIYSLELVMLGTRWKKKFSVGGEDYYKVQHIPSVEFIGGYLK</sequence>
<accession>Q8W474</accession>
<accession>F4IBC6</accession>
<accession>Q9C644</accession>
<accession>Q9SM05</accession>
<name>DRL7_ARATH</name>
<comment type="function">
    <text>Possible disease resistance protein.</text>
</comment>
<comment type="domain">
    <text evidence="1">The LRR repeats probably act as specificity determinant of pathogen recognition.</text>
</comment>
<comment type="similarity">
    <text evidence="3">Belongs to the disease resistance NB-LRR family.</text>
</comment>
<comment type="sequence caution" evidence="3">
    <conflict type="erroneous initiation">
        <sequence resource="EMBL-CDS" id="AAL32876"/>
    </conflict>
    <text>Extended N-terminus.</text>
</comment>
<comment type="sequence caution" evidence="3">
    <conflict type="miscellaneous discrepancy">
        <sequence resource="EMBL-CDS" id="BAA88265"/>
    </conflict>
    <text>Cloning artifact.</text>
</comment>
<comment type="online information" name="NIB-LRRS">
    <link uri="http://niblrrs.ucdavis.edu"/>
    <text>Functional and comparative genomics of disease resistance gene homologs</text>
</comment>
<evidence type="ECO:0000250" key="1"/>
<evidence type="ECO:0000255" key="2"/>
<evidence type="ECO:0000305" key="3"/>
<reference key="1">
    <citation type="journal article" date="1999" name="Gene">
        <title>Isolation and analysis of cDNA within a 300 kb Arabidopsis thaliana genomic region located around the 100 map unit of chromosome 1.</title>
        <authorList>
            <person name="Kato A."/>
            <person name="Suzuki M."/>
            <person name="Kuwahara A."/>
            <person name="Ooe H."/>
            <person name="Higano-Inaba K."/>
            <person name="Komeda Y."/>
        </authorList>
    </citation>
    <scope>NUCLEOTIDE SEQUENCE [GENOMIC DNA]</scope>
    <scope>NUCLEOTIDE SEQUENCE [MRNA] OF 1-592</scope>
    <source>
        <strain>cv. Columbia</strain>
    </source>
</reference>
<reference key="2">
    <citation type="journal article" date="2000" name="Nature">
        <title>Sequence and analysis of chromosome 1 of the plant Arabidopsis thaliana.</title>
        <authorList>
            <person name="Theologis A."/>
            <person name="Ecker J.R."/>
            <person name="Palm C.J."/>
            <person name="Federspiel N.A."/>
            <person name="Kaul S."/>
            <person name="White O."/>
            <person name="Alonso J."/>
            <person name="Altafi H."/>
            <person name="Araujo R."/>
            <person name="Bowman C.L."/>
            <person name="Brooks S.Y."/>
            <person name="Buehler E."/>
            <person name="Chan A."/>
            <person name="Chao Q."/>
            <person name="Chen H."/>
            <person name="Cheuk R.F."/>
            <person name="Chin C.W."/>
            <person name="Chung M.K."/>
            <person name="Conn L."/>
            <person name="Conway A.B."/>
            <person name="Conway A.R."/>
            <person name="Creasy T.H."/>
            <person name="Dewar K."/>
            <person name="Dunn P."/>
            <person name="Etgu P."/>
            <person name="Feldblyum T.V."/>
            <person name="Feng J.-D."/>
            <person name="Fong B."/>
            <person name="Fujii C.Y."/>
            <person name="Gill J.E."/>
            <person name="Goldsmith A.D."/>
            <person name="Haas B."/>
            <person name="Hansen N.F."/>
            <person name="Hughes B."/>
            <person name="Huizar L."/>
            <person name="Hunter J.L."/>
            <person name="Jenkins J."/>
            <person name="Johnson-Hopson C."/>
            <person name="Khan S."/>
            <person name="Khaykin E."/>
            <person name="Kim C.J."/>
            <person name="Koo H.L."/>
            <person name="Kremenetskaia I."/>
            <person name="Kurtz D.B."/>
            <person name="Kwan A."/>
            <person name="Lam B."/>
            <person name="Langin-Hooper S."/>
            <person name="Lee A."/>
            <person name="Lee J.M."/>
            <person name="Lenz C.A."/>
            <person name="Li J.H."/>
            <person name="Li Y.-P."/>
            <person name="Lin X."/>
            <person name="Liu S.X."/>
            <person name="Liu Z.A."/>
            <person name="Luros J.S."/>
            <person name="Maiti R."/>
            <person name="Marziali A."/>
            <person name="Militscher J."/>
            <person name="Miranda M."/>
            <person name="Nguyen M."/>
            <person name="Nierman W.C."/>
            <person name="Osborne B.I."/>
            <person name="Pai G."/>
            <person name="Peterson J."/>
            <person name="Pham P.K."/>
            <person name="Rizzo M."/>
            <person name="Rooney T."/>
            <person name="Rowley D."/>
            <person name="Sakano H."/>
            <person name="Salzberg S.L."/>
            <person name="Schwartz J.R."/>
            <person name="Shinn P."/>
            <person name="Southwick A.M."/>
            <person name="Sun H."/>
            <person name="Tallon L.J."/>
            <person name="Tambunga G."/>
            <person name="Toriumi M.J."/>
            <person name="Town C.D."/>
            <person name="Utterback T."/>
            <person name="Van Aken S."/>
            <person name="Vaysberg M."/>
            <person name="Vysotskaia V.S."/>
            <person name="Walker M."/>
            <person name="Wu D."/>
            <person name="Yu G."/>
            <person name="Fraser C.M."/>
            <person name="Venter J.C."/>
            <person name="Davis R.W."/>
        </authorList>
    </citation>
    <scope>NUCLEOTIDE SEQUENCE [LARGE SCALE GENOMIC DNA]</scope>
    <source>
        <strain>cv. Columbia</strain>
    </source>
</reference>
<reference key="3">
    <citation type="journal article" date="2017" name="Plant J.">
        <title>Araport11: a complete reannotation of the Arabidopsis thaliana reference genome.</title>
        <authorList>
            <person name="Cheng C.Y."/>
            <person name="Krishnakumar V."/>
            <person name="Chan A.P."/>
            <person name="Thibaud-Nissen F."/>
            <person name="Schobel S."/>
            <person name="Town C.D."/>
        </authorList>
    </citation>
    <scope>GENOME REANNOTATION</scope>
    <source>
        <strain>cv. Columbia</strain>
    </source>
</reference>
<reference key="4">
    <citation type="journal article" date="2003" name="Science">
        <title>Empirical analysis of transcriptional activity in the Arabidopsis genome.</title>
        <authorList>
            <person name="Yamada K."/>
            <person name="Lim J."/>
            <person name="Dale J.M."/>
            <person name="Chen H."/>
            <person name="Shinn P."/>
            <person name="Palm C.J."/>
            <person name="Southwick A.M."/>
            <person name="Wu H.C."/>
            <person name="Kim C.J."/>
            <person name="Nguyen M."/>
            <person name="Pham P.K."/>
            <person name="Cheuk R.F."/>
            <person name="Karlin-Newmann G."/>
            <person name="Liu S.X."/>
            <person name="Lam B."/>
            <person name="Sakano H."/>
            <person name="Wu T."/>
            <person name="Yu G."/>
            <person name="Miranda M."/>
            <person name="Quach H.L."/>
            <person name="Tripp M."/>
            <person name="Chang C.H."/>
            <person name="Lee J.M."/>
            <person name="Toriumi M.J."/>
            <person name="Chan M.M."/>
            <person name="Tang C.C."/>
            <person name="Onodera C.S."/>
            <person name="Deng J.M."/>
            <person name="Akiyama K."/>
            <person name="Ansari Y."/>
            <person name="Arakawa T."/>
            <person name="Banh J."/>
            <person name="Banno F."/>
            <person name="Bowser L."/>
            <person name="Brooks S.Y."/>
            <person name="Carninci P."/>
            <person name="Chao Q."/>
            <person name="Choy N."/>
            <person name="Enju A."/>
            <person name="Goldsmith A.D."/>
            <person name="Gurjal M."/>
            <person name="Hansen N.F."/>
            <person name="Hayashizaki Y."/>
            <person name="Johnson-Hopson C."/>
            <person name="Hsuan V.W."/>
            <person name="Iida K."/>
            <person name="Karnes M."/>
            <person name="Khan S."/>
            <person name="Koesema E."/>
            <person name="Ishida J."/>
            <person name="Jiang P.X."/>
            <person name="Jones T."/>
            <person name="Kawai J."/>
            <person name="Kamiya A."/>
            <person name="Meyers C."/>
            <person name="Nakajima M."/>
            <person name="Narusaka M."/>
            <person name="Seki M."/>
            <person name="Sakurai T."/>
            <person name="Satou M."/>
            <person name="Tamse R."/>
            <person name="Vaysberg M."/>
            <person name="Wallender E.K."/>
            <person name="Wong C."/>
            <person name="Yamamura Y."/>
            <person name="Yuan S."/>
            <person name="Shinozaki K."/>
            <person name="Davis R.W."/>
            <person name="Theologis A."/>
            <person name="Ecker J.R."/>
        </authorList>
    </citation>
    <scope>NUCLEOTIDE SEQUENCE [LARGE SCALE MRNA] OF 1-586</scope>
    <source>
        <strain>cv. Columbia</strain>
    </source>
</reference>
<organism>
    <name type="scientific">Arabidopsis thaliana</name>
    <name type="common">Mouse-ear cress</name>
    <dbReference type="NCBI Taxonomy" id="3702"/>
    <lineage>
        <taxon>Eukaryota</taxon>
        <taxon>Viridiplantae</taxon>
        <taxon>Streptophyta</taxon>
        <taxon>Embryophyta</taxon>
        <taxon>Tracheophyta</taxon>
        <taxon>Spermatophyta</taxon>
        <taxon>Magnoliopsida</taxon>
        <taxon>eudicotyledons</taxon>
        <taxon>Gunneridae</taxon>
        <taxon>Pentapetalae</taxon>
        <taxon>rosids</taxon>
        <taxon>malvids</taxon>
        <taxon>Brassicales</taxon>
        <taxon>Brassicaceae</taxon>
        <taxon>Camelineae</taxon>
        <taxon>Arabidopsis</taxon>
    </lineage>
</organism>
<gene>
    <name type="ordered locus">At1g58390</name>
    <name type="ORF">F9K23.8</name>
    <name type="ORF">X7J.2</name>
</gene>